<proteinExistence type="inferred from homology"/>
<organism>
    <name type="scientific">Aliivibrio fischeri (strain ATCC 700601 / ES114)</name>
    <name type="common">Vibrio fischeri</name>
    <dbReference type="NCBI Taxonomy" id="312309"/>
    <lineage>
        <taxon>Bacteria</taxon>
        <taxon>Pseudomonadati</taxon>
        <taxon>Pseudomonadota</taxon>
        <taxon>Gammaproteobacteria</taxon>
        <taxon>Vibrionales</taxon>
        <taxon>Vibrionaceae</taxon>
        <taxon>Aliivibrio</taxon>
    </lineage>
</organism>
<keyword id="KW-1185">Reference proteome</keyword>
<sequence>MKVYDCCDKVRELYSLIGSGDQGYIPQAITCAVKTLNDIAADEALPKEARERAAFAAANLLISDFEDK</sequence>
<name>Y662_ALIF1</name>
<gene>
    <name type="ordered locus">VF_0662</name>
</gene>
<protein>
    <recommendedName>
        <fullName evidence="1">UPF0253 protein VF_0662</fullName>
    </recommendedName>
</protein>
<dbReference type="EMBL" id="CP000020">
    <property type="protein sequence ID" value="AAW85157.1"/>
    <property type="status" value="ALT_INIT"/>
    <property type="molecule type" value="Genomic_DNA"/>
</dbReference>
<dbReference type="RefSeq" id="WP_047863662.1">
    <property type="nucleotide sequence ID" value="NC_006840.2"/>
</dbReference>
<dbReference type="RefSeq" id="YP_204045.1">
    <property type="nucleotide sequence ID" value="NC_006840.2"/>
</dbReference>
<dbReference type="SMR" id="Q5E739"/>
<dbReference type="STRING" id="312309.VF_0662"/>
<dbReference type="EnsemblBacteria" id="AAW85157">
    <property type="protein sequence ID" value="AAW85157"/>
    <property type="gene ID" value="VF_0662"/>
</dbReference>
<dbReference type="GeneID" id="54163317"/>
<dbReference type="KEGG" id="vfi:VF_0662"/>
<dbReference type="PATRIC" id="fig|312309.11.peg.655"/>
<dbReference type="eggNOG" id="ENOG5032Z3X">
    <property type="taxonomic scope" value="Bacteria"/>
</dbReference>
<dbReference type="HOGENOM" id="CLU_190008_0_0_6"/>
<dbReference type="OrthoDB" id="5900992at2"/>
<dbReference type="Proteomes" id="UP000000537">
    <property type="component" value="Chromosome I"/>
</dbReference>
<dbReference type="HAMAP" id="MF_01064">
    <property type="entry name" value="UPF0253"/>
    <property type="match status" value="1"/>
</dbReference>
<dbReference type="InterPro" id="IPR009624">
    <property type="entry name" value="UPF0253"/>
</dbReference>
<dbReference type="NCBIfam" id="NF003436">
    <property type="entry name" value="PRK04964.1"/>
    <property type="match status" value="1"/>
</dbReference>
<dbReference type="Pfam" id="PF06786">
    <property type="entry name" value="UPF0253"/>
    <property type="match status" value="1"/>
</dbReference>
<feature type="chain" id="PRO_0000277527" description="UPF0253 protein VF_0662">
    <location>
        <begin position="1"/>
        <end position="68"/>
    </location>
</feature>
<reference key="1">
    <citation type="journal article" date="2005" name="Proc. Natl. Acad. Sci. U.S.A.">
        <title>Complete genome sequence of Vibrio fischeri: a symbiotic bacterium with pathogenic congeners.</title>
        <authorList>
            <person name="Ruby E.G."/>
            <person name="Urbanowski M."/>
            <person name="Campbell J."/>
            <person name="Dunn A."/>
            <person name="Faini M."/>
            <person name="Gunsalus R."/>
            <person name="Lostroh P."/>
            <person name="Lupp C."/>
            <person name="McCann J."/>
            <person name="Millikan D."/>
            <person name="Schaefer A."/>
            <person name="Stabb E."/>
            <person name="Stevens A."/>
            <person name="Visick K."/>
            <person name="Whistler C."/>
            <person name="Greenberg E.P."/>
        </authorList>
    </citation>
    <scope>NUCLEOTIDE SEQUENCE [LARGE SCALE GENOMIC DNA]</scope>
    <source>
        <strain>ATCC 700601 / ES114</strain>
    </source>
</reference>
<accession>Q5E739</accession>
<evidence type="ECO:0000255" key="1">
    <source>
        <dbReference type="HAMAP-Rule" id="MF_01064"/>
    </source>
</evidence>
<evidence type="ECO:0000305" key="2"/>
<comment type="similarity">
    <text evidence="1">Belongs to the UPF0253 family.</text>
</comment>
<comment type="sequence caution" evidence="2">
    <conflict type="erroneous initiation">
        <sequence resource="EMBL-CDS" id="AAW85157"/>
    </conflict>
</comment>